<proteinExistence type="inferred from homology"/>
<organism>
    <name type="scientific">Influenza A virus (strain A/Henry/1936 H1N1)</name>
    <dbReference type="NCBI Taxonomy" id="425562"/>
    <lineage>
        <taxon>Viruses</taxon>
        <taxon>Riboviria</taxon>
        <taxon>Orthornavirae</taxon>
        <taxon>Negarnaviricota</taxon>
        <taxon>Polyploviricotina</taxon>
        <taxon>Insthoviricetes</taxon>
        <taxon>Articulavirales</taxon>
        <taxon>Orthomyxoviridae</taxon>
        <taxon>Alphainfluenzavirus</taxon>
        <taxon>Alphainfluenzavirus influenzae</taxon>
        <taxon>Influenza A virus</taxon>
    </lineage>
</organism>
<sequence>MDVNPTLLFLKVPAQNAISTTFPYTGDPPYSHGTGTGYTMDTVNRTHQYSERGRWTTNTETGALQLNPIDGPLPEDHEPSGYAQTDCVLEAMAFLEESHPGIFENSCIETMEVVQQTRVDKLTQGRQTYDWTLNRNQPAATALANTIEVFRSNGLTANESGRLIDFLKDVMESMNKEEMGITTHFQRKRRVRDNMTKKMVTQRTIGKRKQRLNKRSYLIRALTLNTMTKDAERGKLKRRAIATPGMQIRGFVYFVETLARSICEKLEQSGLPVGGNEKKAKLANVVRKMMTNSQDTELSFTITGDNTKWNENQNPRMFLAMITYMTRNQPEWFRNVLSIAPIMFSNKMARLGKGYMFESKSMKLRTQIPAEMLASIDLKYFNDSTRKKIEKIRPLLIEGTASLSPGMMMGMFNMLSTVLGVSILNLGQKRYTKTTYWWDGLQSSDDFALIVNAPNHEGIQAGVDRFYRTCKLLGINMSKKKSYINRTGTFEFTSFFYRYGFVANFSMELPSFGVSGINESADMSIGVTVIKNNMINNDLGPATAQMALQLFIKDYRYTYRCHRGDTQIQTRRSFEIKKLWEQTRSKAGLLVSDGGPNLYNIRNLHIPEVCLKWELMDEDYQGRLCNPLNPFVSHKEIESMNNAVMMPAHGPAKNMEYDAVATTHSWIPKRNRSILNTSQRGILEDEQMYQRCCNLFEKFFPSSSYRRPVGISSMVEAMVSRARIDARIDFESGRIKKEEFTEIMKICSTIEELRRQK</sequence>
<evidence type="ECO:0000250" key="1">
    <source>
        <dbReference type="UniProtKB" id="P03431"/>
    </source>
</evidence>
<evidence type="ECO:0000255" key="2">
    <source>
        <dbReference type="HAMAP-Rule" id="MF_04065"/>
    </source>
</evidence>
<reference key="1">
    <citation type="submission" date="2007-03" db="EMBL/GenBank/DDBJ databases">
        <title>The NIAID influenza genome sequencing project.</title>
        <authorList>
            <person name="Ghedin E."/>
            <person name="Spiro D."/>
            <person name="Miller N."/>
            <person name="Zaborsky J."/>
            <person name="Feldblyum T."/>
            <person name="Subbu V."/>
            <person name="Shumway M."/>
            <person name="Sparenborg J."/>
            <person name="Groveman L."/>
            <person name="Halpin R."/>
            <person name="Sitz J."/>
            <person name="Koo H."/>
            <person name="Salzberg S.L."/>
            <person name="Webster R.G."/>
            <person name="Hoffmann E."/>
            <person name="Krauss S."/>
            <person name="Naeve C."/>
            <person name="Bao Y."/>
            <person name="Bolotov P."/>
            <person name="Dernovoy D."/>
            <person name="Kiryutin B."/>
            <person name="Lipman D.J."/>
            <person name="Tatusova T."/>
        </authorList>
    </citation>
    <scope>NUCLEOTIDE SEQUENCE [GENOMIC RNA]</scope>
</reference>
<reference key="2">
    <citation type="submission" date="2007-03" db="EMBL/GenBank/DDBJ databases">
        <authorList>
            <consortium name="The NIAID Influenza Genome Sequencing Consortium"/>
        </authorList>
    </citation>
    <scope>NUCLEOTIDE SEQUENCE [GENOMIC RNA]</scope>
</reference>
<organismHost>
    <name type="scientific">Aves</name>
    <dbReference type="NCBI Taxonomy" id="8782"/>
</organismHost>
<organismHost>
    <name type="scientific">Homo sapiens</name>
    <name type="common">Human</name>
    <dbReference type="NCBI Taxonomy" id="9606"/>
</organismHost>
<organismHost>
    <name type="scientific">Sus scrofa</name>
    <name type="common">Pig</name>
    <dbReference type="NCBI Taxonomy" id="9823"/>
</organismHost>
<comment type="function">
    <text evidence="2">RNA-dependent RNA polymerase which is responsible for replication and transcription of virus RNA segments. The transcription of viral mRNAs occurs by a unique mechanism called cap-snatching. 5' methylated caps of cellular mRNAs are cleaved after 10-13 nucleotides by PA. In turn, these short capped RNAs are used as primers by PB1 for transcription of viral mRNAs. During virus replication, PB1 initiates RNA synthesis and copy vRNA into complementary RNA (cRNA) which in turn serves as a template for the production of more vRNAs.</text>
</comment>
<comment type="catalytic activity">
    <reaction evidence="2">
        <text>RNA(n) + a ribonucleoside 5'-triphosphate = RNA(n+1) + diphosphate</text>
        <dbReference type="Rhea" id="RHEA:21248"/>
        <dbReference type="Rhea" id="RHEA-COMP:14527"/>
        <dbReference type="Rhea" id="RHEA-COMP:17342"/>
        <dbReference type="ChEBI" id="CHEBI:33019"/>
        <dbReference type="ChEBI" id="CHEBI:61557"/>
        <dbReference type="ChEBI" id="CHEBI:140395"/>
        <dbReference type="EC" id="2.7.7.48"/>
    </reaction>
</comment>
<comment type="subunit">
    <text evidence="1 2">Influenza RNA polymerase is composed of three subunits: PB1, PB2 and PA. Interacts (via N-terminus) with PA (via C-terminus). Interacts (via C-terminus) with PB2 (via N-terminus); this interaction is essential for transcription initiation. Interacts (via C-terminus) with human PKP2 (via N-terminus); the interaction competitively inhibits the interaction between the RNA polymerase subunits PB1 and PB2 (By similarity).</text>
</comment>
<comment type="subcellular location">
    <subcellularLocation>
        <location evidence="2">Host nucleus</location>
    </subcellularLocation>
    <subcellularLocation>
        <location evidence="2">Host cytoplasm</location>
    </subcellularLocation>
</comment>
<comment type="PTM">
    <text evidence="2">Phosphorylated by host PRKCA.</text>
</comment>
<comment type="similarity">
    <text evidence="2">Belongs to the influenza viruses polymerase PB1 family.</text>
</comment>
<feature type="chain" id="PRO_0000373047" description="RNA-directed RNA polymerase catalytic subunit">
    <location>
        <begin position="1"/>
        <end position="757"/>
    </location>
</feature>
<feature type="domain" description="RdRp catalytic" evidence="2">
    <location>
        <begin position="286"/>
        <end position="483"/>
    </location>
</feature>
<feature type="region of interest" description="Promoter-binding site" evidence="2">
    <location>
        <begin position="249"/>
        <end position="256"/>
    </location>
</feature>
<feature type="short sequence motif" description="Nuclear localization signal" evidence="2">
    <location>
        <begin position="187"/>
        <end position="195"/>
    </location>
</feature>
<feature type="short sequence motif" description="Nuclear localization signal" evidence="2">
    <location>
        <begin position="203"/>
        <end position="216"/>
    </location>
</feature>
<keyword id="KW-1262">Eukaryotic host gene expression shutoff by virus</keyword>
<keyword id="KW-1191">Eukaryotic host transcription shutoff by virus</keyword>
<keyword id="KW-1035">Host cytoplasm</keyword>
<keyword id="KW-1190">Host gene expression shutoff by virus</keyword>
<keyword id="KW-1048">Host nucleus</keyword>
<keyword id="KW-0945">Host-virus interaction</keyword>
<keyword id="KW-1104">Inhibition of host RNA polymerase II by virus</keyword>
<keyword id="KW-0547">Nucleotide-binding</keyword>
<keyword id="KW-0548">Nucleotidyltransferase</keyword>
<keyword id="KW-0597">Phosphoprotein</keyword>
<keyword id="KW-0696">RNA-directed RNA polymerase</keyword>
<keyword id="KW-0808">Transferase</keyword>
<keyword id="KW-0693">Viral RNA replication</keyword>
<keyword id="KW-1195">Viral transcription</keyword>
<dbReference type="EC" id="2.7.7.48" evidence="2"/>
<dbReference type="EMBL" id="CY020451">
    <property type="protein sequence ID" value="ABO38359.1"/>
    <property type="molecule type" value="Viral_cRNA"/>
</dbReference>
<dbReference type="SMR" id="A4GCJ4"/>
<dbReference type="Proteomes" id="UP000008213">
    <property type="component" value="Genome"/>
</dbReference>
<dbReference type="GO" id="GO:0030430">
    <property type="term" value="C:host cell cytoplasm"/>
    <property type="evidence" value="ECO:0007669"/>
    <property type="project" value="UniProtKB-SubCell"/>
</dbReference>
<dbReference type="GO" id="GO:0042025">
    <property type="term" value="C:host cell nucleus"/>
    <property type="evidence" value="ECO:0007669"/>
    <property type="project" value="UniProtKB-SubCell"/>
</dbReference>
<dbReference type="GO" id="GO:0000166">
    <property type="term" value="F:nucleotide binding"/>
    <property type="evidence" value="ECO:0007669"/>
    <property type="project" value="UniProtKB-UniRule"/>
</dbReference>
<dbReference type="GO" id="GO:0003723">
    <property type="term" value="F:RNA binding"/>
    <property type="evidence" value="ECO:0007669"/>
    <property type="project" value="InterPro"/>
</dbReference>
<dbReference type="GO" id="GO:0003968">
    <property type="term" value="F:RNA-directed RNA polymerase activity"/>
    <property type="evidence" value="ECO:0007669"/>
    <property type="project" value="UniProtKB-UniRule"/>
</dbReference>
<dbReference type="GO" id="GO:0006351">
    <property type="term" value="P:DNA-templated transcription"/>
    <property type="evidence" value="ECO:0007669"/>
    <property type="project" value="UniProtKB-UniRule"/>
</dbReference>
<dbReference type="GO" id="GO:0039657">
    <property type="term" value="P:symbiont-mediated suppression of host gene expression"/>
    <property type="evidence" value="ECO:0007669"/>
    <property type="project" value="UniProtKB-KW"/>
</dbReference>
<dbReference type="GO" id="GO:0039523">
    <property type="term" value="P:symbiont-mediated suppression of host mRNA transcription via inhibition of RNA polymerase II activity"/>
    <property type="evidence" value="ECO:0007669"/>
    <property type="project" value="UniProtKB-UniRule"/>
</dbReference>
<dbReference type="GO" id="GO:0039694">
    <property type="term" value="P:viral RNA genome replication"/>
    <property type="evidence" value="ECO:0007669"/>
    <property type="project" value="UniProtKB-UniRule"/>
</dbReference>
<dbReference type="GO" id="GO:0019083">
    <property type="term" value="P:viral transcription"/>
    <property type="evidence" value="ECO:0007669"/>
    <property type="project" value="UniProtKB-KW"/>
</dbReference>
<dbReference type="Gene3D" id="6.10.140.720">
    <property type="match status" value="1"/>
</dbReference>
<dbReference type="HAMAP" id="MF_04065">
    <property type="entry name" value="INFV_RDRP"/>
    <property type="match status" value="1"/>
</dbReference>
<dbReference type="InterPro" id="IPR007099">
    <property type="entry name" value="RNA-dir_pol_NSvirus"/>
</dbReference>
<dbReference type="InterPro" id="IPR001407">
    <property type="entry name" value="RNA_pol_PB1_influenza"/>
</dbReference>
<dbReference type="Pfam" id="PF00602">
    <property type="entry name" value="Flu_PB1"/>
    <property type="match status" value="1"/>
</dbReference>
<dbReference type="PIRSF" id="PIRSF000827">
    <property type="entry name" value="RdRPol_OMV"/>
    <property type="match status" value="1"/>
</dbReference>
<dbReference type="PROSITE" id="PS50525">
    <property type="entry name" value="RDRP_SSRNA_NEG_SEG"/>
    <property type="match status" value="1"/>
</dbReference>
<accession>A4GCJ4</accession>
<gene>
    <name evidence="2" type="primary">PB1</name>
</gene>
<protein>
    <recommendedName>
        <fullName evidence="2">RNA-directed RNA polymerase catalytic subunit</fullName>
        <ecNumber evidence="2">2.7.7.48</ecNumber>
    </recommendedName>
    <alternativeName>
        <fullName evidence="2">Polymerase basic protein 1</fullName>
        <shortName evidence="2">PB1</shortName>
    </alternativeName>
    <alternativeName>
        <fullName evidence="2">RNA-directed RNA polymerase subunit P1</fullName>
    </alternativeName>
</protein>
<name>RDRP_I36A0</name>